<proteinExistence type="inferred from homology"/>
<comment type="function">
    <text evidence="1">May have microbicidal activities.</text>
</comment>
<comment type="subcellular location">
    <subcellularLocation>
        <location evidence="1">Secreted</location>
    </subcellularLocation>
</comment>
<comment type="similarity">
    <text evidence="4">Belongs to the alpha-defensin family.</text>
</comment>
<keyword id="KW-0044">Antibiotic</keyword>
<keyword id="KW-0929">Antimicrobial</keyword>
<keyword id="KW-0211">Defensin</keyword>
<keyword id="KW-1015">Disulfide bond</keyword>
<keyword id="KW-1185">Reference proteome</keyword>
<keyword id="KW-0964">Secreted</keyword>
<keyword id="KW-0732">Signal</keyword>
<sequence length="93" mass="10510">MKTLVLLSALILLAFQVQADPIQNTDEETKTEEQPGKEDQAVSVSFGDPEGSSLQEESLRDLVCYCRTRGCKRRERMNGTCRKGHLIYTLCCR</sequence>
<evidence type="ECO:0000250" key="1"/>
<evidence type="ECO:0000255" key="2"/>
<evidence type="ECO:0000256" key="3">
    <source>
        <dbReference type="SAM" id="MobiDB-lite"/>
    </source>
</evidence>
<evidence type="ECO:0000305" key="4"/>
<gene>
    <name type="primary">Defa23</name>
    <name type="synonym">Defcr23</name>
</gene>
<feature type="signal peptide" evidence="2">
    <location>
        <begin position="1"/>
        <end position="19"/>
    </location>
</feature>
<feature type="propeptide" id="PRO_0000300072" evidence="1">
    <location>
        <begin position="20"/>
        <end position="58"/>
    </location>
</feature>
<feature type="peptide" id="PRO_0000300073" description="Alpha-defensin 23">
    <location>
        <begin position="59"/>
        <end position="92"/>
    </location>
</feature>
<feature type="region of interest" description="Disordered" evidence="3">
    <location>
        <begin position="24"/>
        <end position="54"/>
    </location>
</feature>
<feature type="compositionally biased region" description="Basic and acidic residues" evidence="3">
    <location>
        <begin position="27"/>
        <end position="40"/>
    </location>
</feature>
<feature type="disulfide bond" evidence="1">
    <location>
        <begin position="64"/>
        <end position="92"/>
    </location>
</feature>
<feature type="disulfide bond" evidence="1">
    <location>
        <begin position="66"/>
        <end position="81"/>
    </location>
</feature>
<feature type="disulfide bond" evidence="1">
    <location>
        <begin position="71"/>
        <end position="91"/>
    </location>
</feature>
<feature type="sequence conflict" description="In Ref. 2; AAI25551/AAI25549." evidence="4" ref="2">
    <original>I</original>
    <variation>V</variation>
    <location>
        <position position="11"/>
    </location>
</feature>
<feature type="sequence conflict" description="In Ref. 2; AAI25551/AAI25549." evidence="4" ref="2">
    <original>K</original>
    <variation>E</variation>
    <location>
        <position position="37"/>
    </location>
</feature>
<feature type="sequence conflict" description="In Ref. 2; AAI25551/AAI25549." evidence="4" ref="2">
    <original>I</original>
    <variation>M</variation>
    <location>
        <position position="87"/>
    </location>
</feature>
<name>DFA23_MOUSE</name>
<reference key="1">
    <citation type="journal article" date="2004" name="Physiol. Genomics">
        <title>Rapid evolution and diversification of mammalian alpha-defensins as revealed by comparative analysis of rodent and primate genes.</title>
        <authorList>
            <person name="Patil A."/>
            <person name="Hughes A.L."/>
            <person name="Zhang G."/>
        </authorList>
    </citation>
    <scope>NUCLEOTIDE SEQUENCE [MRNA]</scope>
</reference>
<reference key="2">
    <citation type="journal article" date="2004" name="Genome Res.">
        <title>The status, quality, and expansion of the NIH full-length cDNA project: the Mammalian Gene Collection (MGC).</title>
        <authorList>
            <consortium name="The MGC Project Team"/>
        </authorList>
    </citation>
    <scope>NUCLEOTIDE SEQUENCE [LARGE SCALE MRNA]</scope>
    <source>
        <tissue>Brain</tissue>
    </source>
</reference>
<accession>Q5G866</accession>
<accession>Q059S0</accession>
<dbReference type="EMBL" id="AY746428">
    <property type="protein sequence ID" value="AAW78337.1"/>
    <property type="molecule type" value="mRNA"/>
</dbReference>
<dbReference type="EMBL" id="BC125548">
    <property type="protein sequence ID" value="AAI25549.1"/>
    <property type="molecule type" value="mRNA"/>
</dbReference>
<dbReference type="EMBL" id="BC125550">
    <property type="protein sequence ID" value="AAI25551.1"/>
    <property type="molecule type" value="mRNA"/>
</dbReference>
<dbReference type="CCDS" id="CCDS40265.1"/>
<dbReference type="RefSeq" id="NP_001012307.1">
    <property type="nucleotide sequence ID" value="NM_001012307.2"/>
</dbReference>
<dbReference type="SMR" id="Q5G866"/>
<dbReference type="FunCoup" id="Q5G866">
    <property type="interactions" value="42"/>
</dbReference>
<dbReference type="STRING" id="10090.ENSMUSP00000096495"/>
<dbReference type="iPTMnet" id="Q5G866"/>
<dbReference type="PhosphoSitePlus" id="Q5G866"/>
<dbReference type="PaxDb" id="10090-ENSMUSP00000096495"/>
<dbReference type="PeptideAtlas" id="Q5G866"/>
<dbReference type="DNASU" id="13226"/>
<dbReference type="Ensembl" id="ENSMUST00000098896.5">
    <property type="protein sequence ID" value="ENSMUSP00000096495.5"/>
    <property type="gene ID" value="ENSMUSG00000074442.5"/>
</dbReference>
<dbReference type="Ensembl" id="ENSMUST00000098899.4">
    <property type="protein sequence ID" value="ENSMUSP00000096498.4"/>
    <property type="gene ID" value="ENSMUSG00000074446.4"/>
</dbReference>
<dbReference type="GeneID" id="13226"/>
<dbReference type="GeneID" id="497114"/>
<dbReference type="KEGG" id="mmu:13226"/>
<dbReference type="KEGG" id="mmu:497114"/>
<dbReference type="UCSC" id="uc009lbk.2">
    <property type="organism name" value="mouse"/>
</dbReference>
<dbReference type="AGR" id="MGI:3630381"/>
<dbReference type="CTD" id="13226"/>
<dbReference type="CTD" id="497114"/>
<dbReference type="MGI" id="MGI:3630381">
    <property type="gene designation" value="Defa23"/>
</dbReference>
<dbReference type="VEuPathDB" id="HostDB:ENSMUSG00000074442"/>
<dbReference type="VEuPathDB" id="HostDB:ENSMUSG00000074446"/>
<dbReference type="eggNOG" id="ENOG502T2EX">
    <property type="taxonomic scope" value="Eukaryota"/>
</dbReference>
<dbReference type="GeneTree" id="ENSGT00940000153268"/>
<dbReference type="HOGENOM" id="CLU_160803_1_0_1"/>
<dbReference type="InParanoid" id="Q5G866"/>
<dbReference type="OMA" id="EGIMGIC"/>
<dbReference type="OrthoDB" id="9625549at2759"/>
<dbReference type="PhylomeDB" id="Q5G866"/>
<dbReference type="TreeFam" id="TF338414"/>
<dbReference type="Reactome" id="R-MMU-1461973">
    <property type="pathway name" value="Defensins"/>
</dbReference>
<dbReference type="Reactome" id="R-MMU-1462054">
    <property type="pathway name" value="Alpha-defensins"/>
</dbReference>
<dbReference type="Reactome" id="R-MMU-6798695">
    <property type="pathway name" value="Neutrophil degranulation"/>
</dbReference>
<dbReference type="BioGRID-ORCS" id="13226">
    <property type="hits" value="5 hits in 38 CRISPR screens"/>
</dbReference>
<dbReference type="BioGRID-ORCS" id="497114">
    <property type="hits" value="5 hits in 17 CRISPR screens"/>
</dbReference>
<dbReference type="PRO" id="PR:Q5G866"/>
<dbReference type="Proteomes" id="UP000000589">
    <property type="component" value="Chromosome 8"/>
</dbReference>
<dbReference type="RNAct" id="Q5G866">
    <property type="molecule type" value="protein"/>
</dbReference>
<dbReference type="Bgee" id="ENSMUSG00000074442">
    <property type="expression patterns" value="Expressed in epiblast cell in embryo and 13 other cell types or tissues"/>
</dbReference>
<dbReference type="GO" id="GO:0005615">
    <property type="term" value="C:extracellular space"/>
    <property type="evidence" value="ECO:0007669"/>
    <property type="project" value="InterPro"/>
</dbReference>
<dbReference type="GO" id="GO:0042742">
    <property type="term" value="P:defense response to bacterium"/>
    <property type="evidence" value="ECO:0007669"/>
    <property type="project" value="UniProtKB-KW"/>
</dbReference>
<dbReference type="InterPro" id="IPR016327">
    <property type="entry name" value="Alpha-defensin"/>
</dbReference>
<dbReference type="InterPro" id="IPR006081">
    <property type="entry name" value="Alpha-defensin_C"/>
</dbReference>
<dbReference type="InterPro" id="IPR002366">
    <property type="entry name" value="Alpha-defensin_N"/>
</dbReference>
<dbReference type="InterPro" id="IPR006080">
    <property type="entry name" value="Beta/alpha-defensin_C"/>
</dbReference>
<dbReference type="PANTHER" id="PTHR11876">
    <property type="entry name" value="ALPHA-DEFENSIN 1"/>
    <property type="match status" value="1"/>
</dbReference>
<dbReference type="PANTHER" id="PTHR11876:SF2">
    <property type="entry name" value="ALPHA-DEFENSIN 1-RELATED"/>
    <property type="match status" value="1"/>
</dbReference>
<dbReference type="Pfam" id="PF00323">
    <property type="entry name" value="Defensin_1"/>
    <property type="match status" value="1"/>
</dbReference>
<dbReference type="Pfam" id="PF00879">
    <property type="entry name" value="Defensin_propep"/>
    <property type="match status" value="1"/>
</dbReference>
<dbReference type="PIRSF" id="PIRSF001875">
    <property type="entry name" value="Alpha-defensin"/>
    <property type="match status" value="1"/>
</dbReference>
<dbReference type="SMART" id="SM01418">
    <property type="entry name" value="Defensin_propep"/>
    <property type="match status" value="1"/>
</dbReference>
<dbReference type="SMART" id="SM00048">
    <property type="entry name" value="DEFSN"/>
    <property type="match status" value="1"/>
</dbReference>
<dbReference type="SUPFAM" id="SSF57392">
    <property type="entry name" value="Defensin-like"/>
    <property type="match status" value="1"/>
</dbReference>
<dbReference type="PROSITE" id="PS00269">
    <property type="entry name" value="DEFENSIN"/>
    <property type="match status" value="1"/>
</dbReference>
<protein>
    <recommendedName>
        <fullName>Alpha-defensin 23</fullName>
    </recommendedName>
    <alternativeName>
        <fullName>Defensin-related cryptdin-23</fullName>
    </alternativeName>
</protein>
<organism>
    <name type="scientific">Mus musculus</name>
    <name type="common">Mouse</name>
    <dbReference type="NCBI Taxonomy" id="10090"/>
    <lineage>
        <taxon>Eukaryota</taxon>
        <taxon>Metazoa</taxon>
        <taxon>Chordata</taxon>
        <taxon>Craniata</taxon>
        <taxon>Vertebrata</taxon>
        <taxon>Euteleostomi</taxon>
        <taxon>Mammalia</taxon>
        <taxon>Eutheria</taxon>
        <taxon>Euarchontoglires</taxon>
        <taxon>Glires</taxon>
        <taxon>Rodentia</taxon>
        <taxon>Myomorpha</taxon>
        <taxon>Muroidea</taxon>
        <taxon>Muridae</taxon>
        <taxon>Murinae</taxon>
        <taxon>Mus</taxon>
        <taxon>Mus</taxon>
    </lineage>
</organism>